<reference key="1">
    <citation type="journal article" date="2002" name="Sheng Wu Hua Xue Yu Sheng Wu Wu Li Jin Zhan">
        <title>Identification and expression analysis of LRRC4, a novel member of leucine-rich repeat (LRR) superfamily.</title>
        <authorList>
            <person name="Wang J."/>
            <person name="Qian J."/>
            <person name="Dong L."/>
            <person name="Li X."/>
            <person name="Tan C."/>
            <person name="Li J."/>
            <person name="Zhang B."/>
            <person name="Zhang X."/>
            <person name="Bin L."/>
            <person name="Zhou J."/>
            <person name="Li G."/>
        </authorList>
    </citation>
    <scope>NUCLEOTIDE SEQUENCE [MRNA]</scope>
    <source>
        <strain>C57BL/J</strain>
    </source>
</reference>
<reference key="2">
    <citation type="journal article" date="2005" name="FEBS Lett.">
        <title>Expression and functional characterization of LRRC4, a novel brain-specific member of the LRR superfamily.</title>
        <authorList>
            <person name="Zhang Q."/>
            <person name="Wang J."/>
            <person name="Fan S."/>
            <person name="Wang L."/>
            <person name="Cao L."/>
            <person name="Tang K."/>
            <person name="Peng C."/>
            <person name="Li Z."/>
            <person name="Li W."/>
            <person name="Gan K."/>
            <person name="Liu Z."/>
            <person name="Li X."/>
            <person name="Shen S."/>
            <person name="Li G."/>
        </authorList>
    </citation>
    <scope>NUCLEOTIDE SEQUENCE [MRNA]</scope>
    <scope>FUNCTION</scope>
    <scope>TISSUE SPECIFICITY</scope>
    <source>
        <strain>BALB/cJ</strain>
    </source>
</reference>
<reference key="3">
    <citation type="journal article" date="2004" name="Genome Res.">
        <title>The status, quality, and expansion of the NIH full-length cDNA project: the Mammalian Gene Collection (MGC).</title>
        <authorList>
            <consortium name="The MGC Project Team"/>
        </authorList>
    </citation>
    <scope>NUCLEOTIDE SEQUENCE [LARGE SCALE MRNA]</scope>
</reference>
<reference key="4">
    <citation type="journal article" date="2006" name="Nat. Neurosci.">
        <title>NGL family PSD-95-interacting adhesion molecules regulate excitatory synapse formation.</title>
        <authorList>
            <person name="Kim S."/>
            <person name="Burette A."/>
            <person name="Chung H.S."/>
            <person name="Kwon S.-K."/>
            <person name="Woo J."/>
            <person name="Lee H.W."/>
            <person name="Kim K."/>
            <person name="Kim H."/>
            <person name="Weinberg R.J."/>
            <person name="Kim E."/>
        </authorList>
    </citation>
    <scope>FUNCTION</scope>
    <scope>INTERACTION WITH NTNG2 AND DLG4</scope>
</reference>
<reference key="5">
    <citation type="journal article" date="2007" name="Proc. Natl. Acad. Sci. U.S.A.">
        <title>Axonal netrin-Gs transneuronally determine lamina-specific subdendritic segments.</title>
        <authorList>
            <person name="Nishimura-Akiyoshi S."/>
            <person name="Niimi K."/>
            <person name="Nakashiba T."/>
            <person name="Itohara S."/>
        </authorList>
    </citation>
    <scope>TISSUE SPECIFICITY</scope>
    <scope>FUNCTION</scope>
</reference>
<reference key="6">
    <citation type="journal article" date="2008" name="Genes Brain Behav.">
        <title>Netrin-G2 and netrin-G2 ligand are both required for normal auditory responsiveness.</title>
        <authorList>
            <person name="Zhang W."/>
            <person name="Rajan I."/>
            <person name="Savelieva K.V."/>
            <person name="Wang C.Y."/>
            <person name="Vogel P."/>
            <person name="Kelly M."/>
            <person name="Xu N."/>
            <person name="Hasson B."/>
            <person name="Jarman W."/>
            <person name="Lanthorn T.H."/>
        </authorList>
    </citation>
    <scope>INTERACTION WITH NTNG2</scope>
    <scope>DISRUPTION PHENOTYPE</scope>
</reference>
<name>LRRC4_MOUSE</name>
<feature type="signal peptide" evidence="2">
    <location>
        <begin position="1"/>
        <end position="40"/>
    </location>
</feature>
<feature type="chain" id="PRO_0000014834" description="Leucine-rich repeat-containing protein 4">
    <location>
        <begin position="41"/>
        <end position="652"/>
    </location>
</feature>
<feature type="topological domain" description="Extracellular" evidence="2">
    <location>
        <begin position="41"/>
        <end position="526"/>
    </location>
</feature>
<feature type="transmembrane region" description="Helical" evidence="2">
    <location>
        <begin position="527"/>
        <end position="547"/>
    </location>
</feature>
<feature type="topological domain" description="Cytoplasmic" evidence="2">
    <location>
        <begin position="548"/>
        <end position="652"/>
    </location>
</feature>
<feature type="domain" description="LRRNT">
    <location>
        <begin position="41"/>
        <end position="74"/>
    </location>
</feature>
<feature type="repeat" description="LRR 1">
    <location>
        <begin position="75"/>
        <end position="96"/>
    </location>
</feature>
<feature type="repeat" description="LRR 2">
    <location>
        <begin position="99"/>
        <end position="120"/>
    </location>
</feature>
<feature type="repeat" description="LRR 3">
    <location>
        <begin position="123"/>
        <end position="144"/>
    </location>
</feature>
<feature type="repeat" description="LRR 4">
    <location>
        <begin position="147"/>
        <end position="168"/>
    </location>
</feature>
<feature type="repeat" description="LRR 5">
    <location>
        <begin position="171"/>
        <end position="193"/>
    </location>
</feature>
<feature type="repeat" description="LRR 6">
    <location>
        <begin position="196"/>
        <end position="217"/>
    </location>
</feature>
<feature type="repeat" description="LRR 7">
    <location>
        <begin position="218"/>
        <end position="239"/>
    </location>
</feature>
<feature type="repeat" description="LRR 8">
    <location>
        <begin position="242"/>
        <end position="263"/>
    </location>
</feature>
<feature type="repeat" description="LRR 9">
    <location>
        <begin position="266"/>
        <end position="287"/>
    </location>
</feature>
<feature type="domain" description="LRRCT">
    <location>
        <begin position="299"/>
        <end position="351"/>
    </location>
</feature>
<feature type="domain" description="Ig-like">
    <location>
        <begin position="352"/>
        <end position="441"/>
    </location>
</feature>
<feature type="glycosylation site" description="N-linked (GlcNAc...) asparagine" evidence="2">
    <location>
        <position position="276"/>
    </location>
</feature>
<feature type="glycosylation site" description="N-linked (GlcNAc...) asparagine" evidence="2">
    <location>
        <position position="321"/>
    </location>
</feature>
<feature type="glycosylation site" description="N-linked (GlcNAc...) asparagine" evidence="2">
    <location>
        <position position="362"/>
    </location>
</feature>
<feature type="glycosylation site" description="N-linked (GlcNAc...) asparagine" evidence="2">
    <location>
        <position position="387"/>
    </location>
</feature>
<feature type="glycosylation site" description="N-linked (GlcNAc...) asparagine" evidence="2">
    <location>
        <position position="409"/>
    </location>
</feature>
<feature type="glycosylation site" description="N-linked (GlcNAc...) asparagine" evidence="2">
    <location>
        <position position="433"/>
    </location>
</feature>
<feature type="glycosylation site" description="N-linked (GlcNAc...) asparagine" evidence="2">
    <location>
        <position position="439"/>
    </location>
</feature>
<feature type="glycosylation site" description="N-linked (GlcNAc...) asparagine" evidence="2">
    <location>
        <position position="449"/>
    </location>
</feature>
<feature type="disulfide bond" evidence="3">
    <location>
        <begin position="45"/>
        <end position="51"/>
    </location>
</feature>
<feature type="disulfide bond" evidence="3">
    <location>
        <begin position="49"/>
        <end position="60"/>
    </location>
</feature>
<feature type="disulfide bond" evidence="3">
    <location>
        <begin position="303"/>
        <end position="328"/>
    </location>
</feature>
<feature type="disulfide bond" evidence="3">
    <location>
        <begin position="305"/>
        <end position="349"/>
    </location>
</feature>
<feature type="disulfide bond" evidence="3">
    <location>
        <begin position="373"/>
        <end position="423"/>
    </location>
</feature>
<feature type="sequence conflict" description="In Ref. 1; AAL67671." evidence="8" ref="1">
    <original>QVSLI</original>
    <variation>H</variation>
    <location>
        <begin position="252"/>
        <end position="256"/>
    </location>
</feature>
<protein>
    <recommendedName>
        <fullName>Leucine-rich repeat-containing protein 4</fullName>
    </recommendedName>
    <alternativeName>
        <fullName>Brain tumor-associated protein MBAG1</fullName>
    </alternativeName>
    <alternativeName>
        <fullName>Netrin-G2 ligand</fullName>
        <shortName>NGL-2</shortName>
    </alternativeName>
</protein>
<evidence type="ECO:0000250" key="1"/>
<evidence type="ECO:0000255" key="2"/>
<evidence type="ECO:0000255" key="3">
    <source>
        <dbReference type="PROSITE-ProRule" id="PRU00114"/>
    </source>
</evidence>
<evidence type="ECO:0000269" key="4">
    <source>
    </source>
</evidence>
<evidence type="ECO:0000269" key="5">
    <source>
    </source>
</evidence>
<evidence type="ECO:0000269" key="6">
    <source>
    </source>
</evidence>
<evidence type="ECO:0000269" key="7">
    <source>
    </source>
</evidence>
<evidence type="ECO:0000305" key="8"/>
<keyword id="KW-1003">Cell membrane</keyword>
<keyword id="KW-1015">Disulfide bond</keyword>
<keyword id="KW-0325">Glycoprotein</keyword>
<keyword id="KW-0393">Immunoglobulin domain</keyword>
<keyword id="KW-0433">Leucine-rich repeat</keyword>
<keyword id="KW-0472">Membrane</keyword>
<keyword id="KW-0628">Postsynaptic cell membrane</keyword>
<keyword id="KW-1185">Reference proteome</keyword>
<keyword id="KW-0677">Repeat</keyword>
<keyword id="KW-0732">Signal</keyword>
<keyword id="KW-0770">Synapse</keyword>
<keyword id="KW-0812">Transmembrane</keyword>
<keyword id="KW-1133">Transmembrane helix</keyword>
<proteinExistence type="evidence at protein level"/>
<accession>Q99PH1</accession>
<accession>Q149E5</accession>
<accession>Q8VI35</accession>
<comment type="function">
    <text evidence="4 5 6">Synaptic adhesion protein. Regulates the formation of exitatory synapses through the recruitment of pre-and-postsynaptic proteins. Organize the lamina/pathway-specific differentiation of dendrites. Plays an important role for auditory synaptic responses. Involved in the suppression of glioma.</text>
</comment>
<comment type="subunit">
    <text evidence="5 7">Interacts (via LRR repeats) with NTNG2. Interacts with DLG4. Forms a complex with DLG4 and with NMDA receptors.</text>
</comment>
<comment type="subcellular location">
    <subcellularLocation>
        <location>Membrane</location>
        <topology>Single-pass type I membrane protein</topology>
    </subcellularLocation>
    <subcellularLocation>
        <location evidence="1">Postsynaptic cell membrane</location>
    </subcellularLocation>
    <text evidence="1">LRRC4 and DLG4 are interdependent for synaptic localization.</text>
</comment>
<comment type="tissue specificity">
    <text evidence="4 6">Specifically expressed in brain. In the hippocampus, parietal cortex and piriform cortex expressed in proximal segments of CA1 pyramidal neurons.</text>
</comment>
<comment type="domain">
    <text>The last 4 C-terminal residues bind to the first 2 PDZ domains of DLG4.</text>
</comment>
<comment type="PTM">
    <text evidence="1">N-glycosylated.</text>
</comment>
<comment type="disruption phenotype">
    <text evidence="7">Mutant mice dysplay impaired startle response to acoustic stimulus.</text>
</comment>
<organism>
    <name type="scientific">Mus musculus</name>
    <name type="common">Mouse</name>
    <dbReference type="NCBI Taxonomy" id="10090"/>
    <lineage>
        <taxon>Eukaryota</taxon>
        <taxon>Metazoa</taxon>
        <taxon>Chordata</taxon>
        <taxon>Craniata</taxon>
        <taxon>Vertebrata</taxon>
        <taxon>Euteleostomi</taxon>
        <taxon>Mammalia</taxon>
        <taxon>Eutheria</taxon>
        <taxon>Euarchontoglires</taxon>
        <taxon>Glires</taxon>
        <taxon>Rodentia</taxon>
        <taxon>Myomorpha</taxon>
        <taxon>Muroidea</taxon>
        <taxon>Muridae</taxon>
        <taxon>Murinae</taxon>
        <taxon>Mus</taxon>
        <taxon>Mus</taxon>
    </lineage>
</organism>
<gene>
    <name type="primary">Lrrc4</name>
</gene>
<sequence length="652" mass="72619">MKLLWQVTVHHTWNAVLLPVVYLTAQVWILCAAIAAAASAGPQNCPSVCSCSNQFSKVVCTRRGLSEVPQGIPSNTRYLNLMENNIQMIQADTFRHLHHLEVLQLGRNSIRQIEVGAFNGLASLNTLELFDNWLTVIPSGAFEYLSKLRELWLRNNPIESIPSYAFNRVPSLMRLDLGELKKLEYISEGAFEGLFNLKYLNLGMCNIKDMPNLTPLVGLEELEMSGNHFPEIRPGSFHGLSSLKKLWVMNSQVSLIERNAFDGLASLVELNLAHNNLSSLPHDLFTPLRYLVELHLHHNPWNCDCDILWLAWWLREYIPTNSTCCGRCHAPMHMRGRYLVEVDQAAFQCSAPFIMDAPRDLNISEDRMAELKCRTPPMSSVKWLLPNGTVLSHASRHPRISVLNDGTLNFSRVLLIDTGVYTCMVTNVAGNSNASAYLNVSSAELNTPNFSFFTTVTVETTEISPEDITRKYKPVPTTSTGYQPAYTTSTTVLIQTTRVPKQVPVPSTDTTDKMQTSLDEVMKTTKIIIGCFVAVTLLAAAMLIVFYKLRKRHQQRSTVTAARTVEIIQVDEDIPAAAPAAATAAPSGVSGEGAVVLPTIHDHINYNTYKPAHGAHWTENSLGNSLHPTVTTISEPYIIQTHTKDKVQETQI</sequence>
<dbReference type="EMBL" id="AF300458">
    <property type="protein sequence ID" value="AAL67671.1"/>
    <property type="molecule type" value="mRNA"/>
</dbReference>
<dbReference type="EMBL" id="DQ177325">
    <property type="protein sequence ID" value="AAG60620.2"/>
    <property type="molecule type" value="mRNA"/>
</dbReference>
<dbReference type="EMBL" id="BC117834">
    <property type="protein sequence ID" value="AAI17835.1"/>
    <property type="molecule type" value="mRNA"/>
</dbReference>
<dbReference type="CCDS" id="CCDS39448.1"/>
<dbReference type="RefSeq" id="NP_619623.2">
    <property type="nucleotide sequence ID" value="NM_138682.2"/>
</dbReference>
<dbReference type="SMR" id="Q99PH1"/>
<dbReference type="BioGRID" id="228675">
    <property type="interactions" value="2"/>
</dbReference>
<dbReference type="DIP" id="DIP-46449N"/>
<dbReference type="FunCoup" id="Q99PH1">
    <property type="interactions" value="715"/>
</dbReference>
<dbReference type="IntAct" id="Q99PH1">
    <property type="interactions" value="1"/>
</dbReference>
<dbReference type="STRING" id="10090.ENSMUSP00000062158"/>
<dbReference type="GlyConnect" id="2469">
    <property type="glycosylation" value="4 N-Linked glycans (3 sites)"/>
</dbReference>
<dbReference type="GlyCosmos" id="Q99PH1">
    <property type="glycosylation" value="8 sites, 3 glycans"/>
</dbReference>
<dbReference type="GlyGen" id="Q99PH1">
    <property type="glycosylation" value="8 sites, 7 N-linked glycans (4 sites)"/>
</dbReference>
<dbReference type="iPTMnet" id="Q99PH1"/>
<dbReference type="PhosphoSitePlus" id="Q99PH1"/>
<dbReference type="PaxDb" id="10090-ENSMUSP00000062158"/>
<dbReference type="ProteomicsDB" id="290170"/>
<dbReference type="Antibodypedia" id="55653">
    <property type="antibodies" value="107 antibodies from 25 providers"/>
</dbReference>
<dbReference type="DNASU" id="192198"/>
<dbReference type="Ensembl" id="ENSMUST00000062304.7">
    <property type="protein sequence ID" value="ENSMUSP00000062158.6"/>
    <property type="gene ID" value="ENSMUSG00000049939.7"/>
</dbReference>
<dbReference type="GeneID" id="192198"/>
<dbReference type="KEGG" id="mmu:192198"/>
<dbReference type="UCSC" id="uc009bcu.1">
    <property type="organism name" value="mouse"/>
</dbReference>
<dbReference type="AGR" id="MGI:2182081"/>
<dbReference type="CTD" id="64101"/>
<dbReference type="MGI" id="MGI:2182081">
    <property type="gene designation" value="Lrrc4"/>
</dbReference>
<dbReference type="VEuPathDB" id="HostDB:ENSMUSG00000049939"/>
<dbReference type="eggNOG" id="KOG0619">
    <property type="taxonomic scope" value="Eukaryota"/>
</dbReference>
<dbReference type="GeneTree" id="ENSGT00940000159260"/>
<dbReference type="HOGENOM" id="CLU_000288_18_24_1"/>
<dbReference type="InParanoid" id="Q99PH1"/>
<dbReference type="OMA" id="WTDNNVG"/>
<dbReference type="OrthoDB" id="28057at2759"/>
<dbReference type="PhylomeDB" id="Q99PH1"/>
<dbReference type="TreeFam" id="TF324303"/>
<dbReference type="BioGRID-ORCS" id="192198">
    <property type="hits" value="1 hit in 78 CRISPR screens"/>
</dbReference>
<dbReference type="PRO" id="PR:Q99PH1"/>
<dbReference type="Proteomes" id="UP000000589">
    <property type="component" value="Chromosome 6"/>
</dbReference>
<dbReference type="RNAct" id="Q99PH1">
    <property type="molecule type" value="protein"/>
</dbReference>
<dbReference type="Bgee" id="ENSMUSG00000049939">
    <property type="expression patterns" value="Expressed in interventricular septum and 154 other cell types or tissues"/>
</dbReference>
<dbReference type="ExpressionAtlas" id="Q99PH1">
    <property type="expression patterns" value="baseline and differential"/>
</dbReference>
<dbReference type="GO" id="GO:0043197">
    <property type="term" value="C:dendritic spine"/>
    <property type="evidence" value="ECO:0000314"/>
    <property type="project" value="MGI"/>
</dbReference>
<dbReference type="GO" id="GO:0060076">
    <property type="term" value="C:excitatory synapse"/>
    <property type="evidence" value="ECO:0000314"/>
    <property type="project" value="MGI"/>
</dbReference>
<dbReference type="GO" id="GO:0098978">
    <property type="term" value="C:glutamatergic synapse"/>
    <property type="evidence" value="ECO:0000314"/>
    <property type="project" value="SynGO"/>
</dbReference>
<dbReference type="GO" id="GO:0044309">
    <property type="term" value="C:neuron spine"/>
    <property type="evidence" value="ECO:0000314"/>
    <property type="project" value="MGI"/>
</dbReference>
<dbReference type="GO" id="GO:0098839">
    <property type="term" value="C:postsynaptic density membrane"/>
    <property type="evidence" value="ECO:0000314"/>
    <property type="project" value="SynGO"/>
</dbReference>
<dbReference type="GO" id="GO:0045211">
    <property type="term" value="C:postsynaptic membrane"/>
    <property type="evidence" value="ECO:0000314"/>
    <property type="project" value="MGI"/>
</dbReference>
<dbReference type="GO" id="GO:0098685">
    <property type="term" value="C:Schaffer collateral - CA1 synapse"/>
    <property type="evidence" value="ECO:0000314"/>
    <property type="project" value="SynGO"/>
</dbReference>
<dbReference type="GO" id="GO:0045202">
    <property type="term" value="C:synapse"/>
    <property type="evidence" value="ECO:0000314"/>
    <property type="project" value="MGI"/>
</dbReference>
<dbReference type="GO" id="GO:1904861">
    <property type="term" value="P:excitatory synapse assembly"/>
    <property type="evidence" value="ECO:0000315"/>
    <property type="project" value="MGI"/>
</dbReference>
<dbReference type="GO" id="GO:0050804">
    <property type="term" value="P:modulation of chemical synaptic transmission"/>
    <property type="evidence" value="ECO:0000314"/>
    <property type="project" value="SynGO"/>
</dbReference>
<dbReference type="GO" id="GO:0097119">
    <property type="term" value="P:postsynaptic density protein 95 clustering"/>
    <property type="evidence" value="ECO:0000314"/>
    <property type="project" value="MGI"/>
</dbReference>
<dbReference type="GO" id="GO:0050808">
    <property type="term" value="P:synapse organization"/>
    <property type="evidence" value="ECO:0000314"/>
    <property type="project" value="MGI"/>
</dbReference>
<dbReference type="GO" id="GO:0099560">
    <property type="term" value="P:synaptic membrane adhesion"/>
    <property type="evidence" value="ECO:0007669"/>
    <property type="project" value="Ensembl"/>
</dbReference>
<dbReference type="FunFam" id="3.80.10.10:FF:000012">
    <property type="entry name" value="Leucine rich repeat containing 4"/>
    <property type="match status" value="1"/>
</dbReference>
<dbReference type="FunFam" id="2.60.40.10:FF:000076">
    <property type="entry name" value="Leucine-rich repeat and Ig domain-containing 4"/>
    <property type="match status" value="1"/>
</dbReference>
<dbReference type="Gene3D" id="2.60.40.10">
    <property type="entry name" value="Immunoglobulins"/>
    <property type="match status" value="1"/>
</dbReference>
<dbReference type="Gene3D" id="3.80.10.10">
    <property type="entry name" value="Ribonuclease Inhibitor"/>
    <property type="match status" value="1"/>
</dbReference>
<dbReference type="InterPro" id="IPR000483">
    <property type="entry name" value="Cys-rich_flank_reg_C"/>
</dbReference>
<dbReference type="InterPro" id="IPR007110">
    <property type="entry name" value="Ig-like_dom"/>
</dbReference>
<dbReference type="InterPro" id="IPR036179">
    <property type="entry name" value="Ig-like_dom_sf"/>
</dbReference>
<dbReference type="InterPro" id="IPR013783">
    <property type="entry name" value="Ig-like_fold"/>
</dbReference>
<dbReference type="InterPro" id="IPR013098">
    <property type="entry name" value="Ig_I-set"/>
</dbReference>
<dbReference type="InterPro" id="IPR003599">
    <property type="entry name" value="Ig_sub"/>
</dbReference>
<dbReference type="InterPro" id="IPR003598">
    <property type="entry name" value="Ig_sub2"/>
</dbReference>
<dbReference type="InterPro" id="IPR001611">
    <property type="entry name" value="Leu-rich_rpt"/>
</dbReference>
<dbReference type="InterPro" id="IPR003591">
    <property type="entry name" value="Leu-rich_rpt_typical-subtyp"/>
</dbReference>
<dbReference type="InterPro" id="IPR032675">
    <property type="entry name" value="LRR_dom_sf"/>
</dbReference>
<dbReference type="InterPro" id="IPR050541">
    <property type="entry name" value="LRR_TM_domain-containing"/>
</dbReference>
<dbReference type="InterPro" id="IPR000372">
    <property type="entry name" value="LRRNT"/>
</dbReference>
<dbReference type="PANTHER" id="PTHR24369">
    <property type="entry name" value="ANTIGEN BSP, PUTATIVE-RELATED"/>
    <property type="match status" value="1"/>
</dbReference>
<dbReference type="PANTHER" id="PTHR24369:SF9">
    <property type="entry name" value="LEUCINE-RICH REPEAT-CONTAINING PROTEIN 4"/>
    <property type="match status" value="1"/>
</dbReference>
<dbReference type="Pfam" id="PF07679">
    <property type="entry name" value="I-set"/>
    <property type="match status" value="1"/>
</dbReference>
<dbReference type="Pfam" id="PF13855">
    <property type="entry name" value="LRR_8"/>
    <property type="match status" value="3"/>
</dbReference>
<dbReference type="SMART" id="SM00409">
    <property type="entry name" value="IG"/>
    <property type="match status" value="1"/>
</dbReference>
<dbReference type="SMART" id="SM00408">
    <property type="entry name" value="IGc2"/>
    <property type="match status" value="1"/>
</dbReference>
<dbReference type="SMART" id="SM00369">
    <property type="entry name" value="LRR_TYP"/>
    <property type="match status" value="7"/>
</dbReference>
<dbReference type="SMART" id="SM00082">
    <property type="entry name" value="LRRCT"/>
    <property type="match status" value="1"/>
</dbReference>
<dbReference type="SMART" id="SM00013">
    <property type="entry name" value="LRRNT"/>
    <property type="match status" value="1"/>
</dbReference>
<dbReference type="SUPFAM" id="SSF48726">
    <property type="entry name" value="Immunoglobulin"/>
    <property type="match status" value="1"/>
</dbReference>
<dbReference type="SUPFAM" id="SSF52058">
    <property type="entry name" value="L domain-like"/>
    <property type="match status" value="1"/>
</dbReference>
<dbReference type="PROSITE" id="PS50835">
    <property type="entry name" value="IG_LIKE"/>
    <property type="match status" value="1"/>
</dbReference>
<dbReference type="PROSITE" id="PS51450">
    <property type="entry name" value="LRR"/>
    <property type="match status" value="7"/>
</dbReference>